<organism evidence="9">
    <name type="scientific">Rattus norvegicus</name>
    <name type="common">Rat</name>
    <dbReference type="NCBI Taxonomy" id="10116"/>
    <lineage>
        <taxon>Eukaryota</taxon>
        <taxon>Metazoa</taxon>
        <taxon>Chordata</taxon>
        <taxon>Craniata</taxon>
        <taxon>Vertebrata</taxon>
        <taxon>Euteleostomi</taxon>
        <taxon>Mammalia</taxon>
        <taxon>Eutheria</taxon>
        <taxon>Euarchontoglires</taxon>
        <taxon>Glires</taxon>
        <taxon>Rodentia</taxon>
        <taxon>Myomorpha</taxon>
        <taxon>Muroidea</taxon>
        <taxon>Muridae</taxon>
        <taxon>Murinae</taxon>
        <taxon>Rattus</taxon>
    </lineage>
</organism>
<proteinExistence type="evidence at protein level"/>
<sequence>MSTPGKENFRLKSYKNKSLNPDEMRRRREEEGLQLRKQKREEQLFKRRNVATAEEETEEEVMSDGGFHEAQINNMEMAPGGVITSDMTEMIFSNSPEQQLSATQKFRKLLSKEPNPPIDEVINTPGVVARFVEFLKRKENCTLQFESAWVLTNIASGNSLQTRIVIQAGAVPIFIELLSSEFEDVQEQAVWALGNIAGDSTMCRDYVLDCNILPPLLQLFSKQNRLTMTRNAVWALSNLCRGKSPPPEFAKVSPCLNVLSWLLFVSDTDVLADACWALSYLSDGPNDKIQAVIDAGVCRRLVELLMHNDYKVVSPALRAVGNIVTGDDIQTQVILNCSALQSLLHLLSSPKESIKKEACWTISNITAGNRAQIQTVIDANMFPALISILQTAEFRTRKEAAWAITNATSGGSAEQIKYLVELGCIKPLCDLLTVMDAKIVQVALNGLENILRLGEQEAKRNGSGINPYCALIEEAYGLDKIEFLQSHENQEIYQKAFDLIEHYFGTEDEDSSIAPQVDLSQQQYIFQQCEAPMEGSQL</sequence>
<reference evidence="8" key="1">
    <citation type="journal article" date="2004" name="Gene">
        <title>Molecular cloning and characterization of rat karyopherin alpha1 gene: structure and expression.</title>
        <authorList>
            <person name="Wang B."/>
            <person name="Li Z."/>
            <person name="Xu L."/>
            <person name="Goggi J."/>
            <person name="Yu Y."/>
            <person name="Zhou J."/>
        </authorList>
    </citation>
    <scope>NUCLEOTIDE SEQUENCE [MRNA]</scope>
    <scope>TISSUE SPECIFICITY</scope>
    <scope>INDUCTION</scope>
    <source>
        <strain evidence="9">Sprague-Dawley</strain>
        <tissue evidence="6">Brain</tissue>
    </source>
</reference>
<reference key="2">
    <citation type="journal article" date="2008" name="PLoS Biol.">
        <title>Caldendrin-Jacob: a protein liaison that couples NMDA receptor signalling to the nucleus.</title>
        <authorList>
            <person name="Dieterich D.C."/>
            <person name="Karpova A."/>
            <person name="Mikhaylova M."/>
            <person name="Zdobnova I."/>
            <person name="Konig I."/>
            <person name="Landwehr M."/>
            <person name="Kreutz M."/>
            <person name="Smalla K.H."/>
            <person name="Richter K."/>
            <person name="Landgraf P."/>
            <person name="Reissner C."/>
            <person name="Boeckers T.M."/>
            <person name="Zuschratter W."/>
            <person name="Spilker C."/>
            <person name="Seidenbecher C.I."/>
            <person name="Garner C.C."/>
            <person name="Gundelfinger E.D."/>
            <person name="Kreutz M.R."/>
        </authorList>
    </citation>
    <scope>FUNCTION</scope>
    <scope>INTERACTION WITH NSMF</scope>
</reference>
<dbReference type="EMBL" id="AY351984">
    <property type="protein sequence ID" value="AAQ56727.1"/>
    <property type="molecule type" value="mRNA"/>
</dbReference>
<dbReference type="SMR" id="P83953"/>
<dbReference type="CORUM" id="P83953"/>
<dbReference type="DIP" id="DIP-46060N"/>
<dbReference type="FunCoup" id="P83953">
    <property type="interactions" value="2812"/>
</dbReference>
<dbReference type="IntAct" id="P83953">
    <property type="interactions" value="4"/>
</dbReference>
<dbReference type="STRING" id="10116.ENSRNOP00000071569"/>
<dbReference type="iPTMnet" id="P83953"/>
<dbReference type="PhosphoSitePlus" id="P83953"/>
<dbReference type="jPOST" id="P83953"/>
<dbReference type="PaxDb" id="10116-ENSRNOP00000033271"/>
<dbReference type="UCSC" id="RGD:735064">
    <property type="organism name" value="rat"/>
</dbReference>
<dbReference type="AGR" id="RGD:735064"/>
<dbReference type="RGD" id="735064">
    <property type="gene designation" value="Kpna1"/>
</dbReference>
<dbReference type="eggNOG" id="KOG0166">
    <property type="taxonomic scope" value="Eukaryota"/>
</dbReference>
<dbReference type="InParanoid" id="P83953"/>
<dbReference type="PhylomeDB" id="P83953"/>
<dbReference type="Reactome" id="R-RNO-140342">
    <property type="pathway name" value="Apoptosis induced DNA fragmentation"/>
</dbReference>
<dbReference type="Reactome" id="R-RNO-68616">
    <property type="pathway name" value="Assembly of the ORC complex at the origin of replication"/>
</dbReference>
<dbReference type="Reactome" id="R-RNO-909733">
    <property type="pathway name" value="Interferon alpha/beta signaling"/>
</dbReference>
<dbReference type="PRO" id="PR:P83953"/>
<dbReference type="Proteomes" id="UP000002494">
    <property type="component" value="Unplaced"/>
</dbReference>
<dbReference type="GO" id="GO:0005829">
    <property type="term" value="C:cytosol"/>
    <property type="evidence" value="ECO:0000266"/>
    <property type="project" value="RGD"/>
</dbReference>
<dbReference type="GO" id="GO:0030425">
    <property type="term" value="C:dendrite"/>
    <property type="evidence" value="ECO:0000314"/>
    <property type="project" value="UniProtKB"/>
</dbReference>
<dbReference type="GO" id="GO:0098978">
    <property type="term" value="C:glutamatergic synapse"/>
    <property type="evidence" value="ECO:0000266"/>
    <property type="project" value="RGD"/>
</dbReference>
<dbReference type="GO" id="GO:0042564">
    <property type="term" value="C:NLS-dependent protein nuclear import complex"/>
    <property type="evidence" value="ECO:0000266"/>
    <property type="project" value="RGD"/>
</dbReference>
<dbReference type="GO" id="GO:0005654">
    <property type="term" value="C:nucleoplasm"/>
    <property type="evidence" value="ECO:0000266"/>
    <property type="project" value="RGD"/>
</dbReference>
<dbReference type="GO" id="GO:0005634">
    <property type="term" value="C:nucleus"/>
    <property type="evidence" value="ECO:0000314"/>
    <property type="project" value="UniProtKB"/>
</dbReference>
<dbReference type="GO" id="GO:0014069">
    <property type="term" value="C:postsynaptic density"/>
    <property type="evidence" value="ECO:0000266"/>
    <property type="project" value="RGD"/>
</dbReference>
<dbReference type="GO" id="GO:0061608">
    <property type="term" value="F:nuclear import signal receptor activity"/>
    <property type="evidence" value="ECO:0000266"/>
    <property type="project" value="RGD"/>
</dbReference>
<dbReference type="GO" id="GO:0008139">
    <property type="term" value="F:nuclear localization sequence binding"/>
    <property type="evidence" value="ECO:0000314"/>
    <property type="project" value="ParkinsonsUK-UCL"/>
</dbReference>
<dbReference type="GO" id="GO:0006607">
    <property type="term" value="P:NLS-bearing protein import into nucleus"/>
    <property type="evidence" value="ECO:0000315"/>
    <property type="project" value="ParkinsonsUK-UCL"/>
</dbReference>
<dbReference type="GO" id="GO:0099527">
    <property type="term" value="P:postsynapse to nucleus signaling pathway"/>
    <property type="evidence" value="ECO:0000266"/>
    <property type="project" value="RGD"/>
</dbReference>
<dbReference type="GO" id="GO:0042981">
    <property type="term" value="P:regulation of apoptotic process"/>
    <property type="evidence" value="ECO:0000266"/>
    <property type="project" value="RGD"/>
</dbReference>
<dbReference type="GO" id="GO:0060828">
    <property type="term" value="P:regulation of canonical Wnt signaling pathway"/>
    <property type="evidence" value="ECO:0000266"/>
    <property type="project" value="RGD"/>
</dbReference>
<dbReference type="GO" id="GO:0014901">
    <property type="term" value="P:satellite cell activation involved in skeletal muscle regeneration"/>
    <property type="evidence" value="ECO:0000266"/>
    <property type="project" value="RGD"/>
</dbReference>
<dbReference type="GO" id="GO:0014841">
    <property type="term" value="P:skeletal muscle satellite cell proliferation"/>
    <property type="evidence" value="ECO:0000266"/>
    <property type="project" value="RGD"/>
</dbReference>
<dbReference type="GO" id="GO:0043403">
    <property type="term" value="P:skeletal muscle tissue regeneration"/>
    <property type="evidence" value="ECO:0000266"/>
    <property type="project" value="RGD"/>
</dbReference>
<dbReference type="FunFam" id="1.20.5.690:FF:000001">
    <property type="entry name" value="Importin subunit alpha"/>
    <property type="match status" value="1"/>
</dbReference>
<dbReference type="FunFam" id="1.25.10.10:FF:000013">
    <property type="entry name" value="Importin subunit alpha"/>
    <property type="match status" value="1"/>
</dbReference>
<dbReference type="Gene3D" id="1.20.5.690">
    <property type="entry name" value="Importin-alpha, importin-beta-binding domain"/>
    <property type="match status" value="1"/>
</dbReference>
<dbReference type="Gene3D" id="1.25.10.10">
    <property type="entry name" value="Leucine-rich Repeat Variant"/>
    <property type="match status" value="1"/>
</dbReference>
<dbReference type="InterPro" id="IPR011989">
    <property type="entry name" value="ARM-like"/>
</dbReference>
<dbReference type="InterPro" id="IPR016024">
    <property type="entry name" value="ARM-type_fold"/>
</dbReference>
<dbReference type="InterPro" id="IPR032413">
    <property type="entry name" value="Arm_3"/>
</dbReference>
<dbReference type="InterPro" id="IPR000225">
    <property type="entry name" value="Armadillo"/>
</dbReference>
<dbReference type="InterPro" id="IPR002652">
    <property type="entry name" value="Importin-a_IBB"/>
</dbReference>
<dbReference type="InterPro" id="IPR036975">
    <property type="entry name" value="Importin-a_IBB_sf"/>
</dbReference>
<dbReference type="InterPro" id="IPR024931">
    <property type="entry name" value="Importin_alpha"/>
</dbReference>
<dbReference type="PANTHER" id="PTHR23316">
    <property type="entry name" value="IMPORTIN ALPHA"/>
    <property type="match status" value="1"/>
</dbReference>
<dbReference type="Pfam" id="PF00514">
    <property type="entry name" value="Arm"/>
    <property type="match status" value="8"/>
</dbReference>
<dbReference type="Pfam" id="PF16186">
    <property type="entry name" value="Arm_3"/>
    <property type="match status" value="1"/>
</dbReference>
<dbReference type="Pfam" id="PF01749">
    <property type="entry name" value="IBB"/>
    <property type="match status" value="1"/>
</dbReference>
<dbReference type="PIRSF" id="PIRSF005673">
    <property type="entry name" value="Importin_alpha"/>
    <property type="match status" value="1"/>
</dbReference>
<dbReference type="SMART" id="SM00185">
    <property type="entry name" value="ARM"/>
    <property type="match status" value="8"/>
</dbReference>
<dbReference type="SUPFAM" id="SSF48371">
    <property type="entry name" value="ARM repeat"/>
    <property type="match status" value="1"/>
</dbReference>
<dbReference type="PROSITE" id="PS50176">
    <property type="entry name" value="ARM_REPEAT"/>
    <property type="match status" value="4"/>
</dbReference>
<dbReference type="PROSITE" id="PS51214">
    <property type="entry name" value="IBB"/>
    <property type="match status" value="1"/>
</dbReference>
<name>IMA5_RAT</name>
<evidence type="ECO:0000250" key="1">
    <source>
        <dbReference type="UniProtKB" id="P52293"/>
    </source>
</evidence>
<evidence type="ECO:0000250" key="2">
    <source>
        <dbReference type="UniProtKB" id="P52294"/>
    </source>
</evidence>
<evidence type="ECO:0000250" key="3">
    <source>
        <dbReference type="UniProtKB" id="Q60960"/>
    </source>
</evidence>
<evidence type="ECO:0000255" key="4">
    <source>
        <dbReference type="PROSITE-ProRule" id="PRU00561"/>
    </source>
</evidence>
<evidence type="ECO:0000256" key="5">
    <source>
        <dbReference type="SAM" id="MobiDB-lite"/>
    </source>
</evidence>
<evidence type="ECO:0000269" key="6">
    <source>
    </source>
</evidence>
<evidence type="ECO:0000269" key="7">
    <source>
    </source>
</evidence>
<evidence type="ECO:0000305" key="8"/>
<evidence type="ECO:0000312" key="9">
    <source>
        <dbReference type="EMBL" id="AAQ56727.1"/>
    </source>
</evidence>
<gene>
    <name type="primary">Kpna1</name>
</gene>
<comment type="function">
    <text evidence="2 7">Functions in nuclear protein import as an adapter protein for nuclear receptor KPNB1 (PubMed:18303947). Binds specifically and directly to substrates containing either a simple or bipartite NLS motif (PubMed:18303947). Docking of the importin/substrate complex to the nuclear pore complex (NPC) is mediated by KPNB1 through binding to nucleoporin FxFG repeats and the complex is subsequently translocated through the pore by an energy requiring, Ran-dependent mechanism (PubMed:18303947). At the nucleoplasmic side of the NPC, Ran binds to importin-beta and the three components separate and importin-alpha and -beta are re-exported from the nucleus to the cytoplasm where GTP hydrolysis releases Ran from importin (PubMed:18303947). The directionality of nuclear import is thought to be conferred by an asymmetric distribution of the GTP- and GDP-bound forms of Ran between the cytoplasm and nucleus (PubMed:18303947). Mediator of PR-DUB complex component BAP1 nuclear import; acts redundantly with KPNA2 and Transportin-1/TNPO1 (By similarity).</text>
</comment>
<comment type="subunit">
    <text evidence="2 3 7">Heterodimer; with KPNB1 (By similarity). Interacts with APEX1 (via its N-terminus) (By similarity). Interacts with CTNNBL1 (via its N-terminal) (By similarity). Interacts with AICDA (via its NLS) (By similarity). Interacts with ANP32E and ZIC3 (By similarity). Interacts with SNAI1 (via zinc fingers) (By similarity). Interacts with NSMF; the interaction occurs in a calcium-independent manner after synaptic NMDA receptor stimulation and is required for nuclear import of NSMF but is competed by CABP1 (PubMed:18303947). Interacts with DCAF8 (By similarity). Interacts with ITSN1 isoform 2 (By similarity). Interacts with TALDO1 (By similarity). Interacts with the AMPK-mediated 'Ser-659' phosphorylated form of ACSS2; this interaction results in nuclear translocation of ACSS2 (By similarity). Interacts with BAP1 (via C-terminus); the interaction contributes to BAP1 nuclear localization (By similarity).</text>
</comment>
<comment type="subcellular location">
    <subcellularLocation>
        <location evidence="2">Cytoplasm</location>
    </subcellularLocation>
    <subcellularLocation>
        <location evidence="2">Nucleus</location>
    </subcellularLocation>
</comment>
<comment type="tissue specificity">
    <text evidence="6">Expressed significantly in the heart, kidney, placenta, pancreas and spleen with lower levels detected in the brain, liver and skeletal muscle.</text>
</comment>
<comment type="induction">
    <text evidence="6">Injection of 6-hydroxydopamine into the ascending medial forebrain bundle causes the formation of lesions and leads to up-regulation of KPNA1 in the denervated striatum in a time-dependent manner, reaching a maximum two weeks post-lesion.</text>
</comment>
<comment type="domain">
    <text evidence="2">Consists of an N-terminal hydrophilic region, a hydrophobic central region composed of 10 repeats, and a short hydrophilic C-terminus. The N-terminal hydrophilic region contains the importin beta binding domain (IBB domain), which is sufficient for binding importin beta and essential for nuclear protein import.</text>
</comment>
<comment type="domain">
    <text evidence="1">The IBB domain is thought to act as an intrasteric autoregulatory sequence by interacting with the internal autoinhibitory NLS. Binding of KPNB1 probably overlaps the internal NLS and contributes to a high affinity for cytoplasmic NLS-containing cargo substrates. After dissociation of the importin/substrate complex in the nucleus the internal autohibitory NLS contributes to a low affinity for nuclear NLS-containing proteins (By similarity).</text>
</comment>
<comment type="domain">
    <text evidence="1">The major and minor NLS binding sites are mainly involved in recognition of simple or bipartite NLS motifs. Structurally located within in a helical surface groove they contain several conserved Trp and Asn residues of the corresponding third helices (H3) of ARM repeats which mainly contribute to binding (By similarity).</text>
</comment>
<comment type="PTM">
    <text evidence="2">Polyubiquitinated in the presence of RAG1 (in vitro).</text>
</comment>
<comment type="similarity">
    <text evidence="8">Belongs to the importin alpha family.</text>
</comment>
<protein>
    <recommendedName>
        <fullName>Importin subunit alpha-5</fullName>
    </recommendedName>
    <alternativeName>
        <fullName>Importin alpha-5</fullName>
    </alternativeName>
    <alternativeName>
        <fullName>Karyopherin subunit alpha-1</fullName>
    </alternativeName>
</protein>
<accession>P83953</accession>
<feature type="chain" id="PRO_0000120721" description="Importin subunit alpha-5">
    <location>
        <begin position="1"/>
        <end position="538"/>
    </location>
</feature>
<feature type="domain" description="IBB" evidence="4">
    <location>
        <begin position="1"/>
        <end position="57"/>
    </location>
</feature>
<feature type="repeat" description="ARM 1; truncated">
    <location>
        <begin position="77"/>
        <end position="117"/>
    </location>
</feature>
<feature type="repeat" description="ARM 2" evidence="8">
    <location>
        <begin position="118"/>
        <end position="161"/>
    </location>
</feature>
<feature type="repeat" description="ARM 3" evidence="8">
    <location>
        <begin position="162"/>
        <end position="206"/>
    </location>
</feature>
<feature type="repeat" description="ARM 4" evidence="8">
    <location>
        <begin position="207"/>
        <end position="245"/>
    </location>
</feature>
<feature type="repeat" description="ARM 5" evidence="8">
    <location>
        <begin position="246"/>
        <end position="290"/>
    </location>
</feature>
<feature type="repeat" description="ARM 6" evidence="8">
    <location>
        <begin position="291"/>
        <end position="330"/>
    </location>
</feature>
<feature type="repeat" description="ARM 7" evidence="8">
    <location>
        <begin position="331"/>
        <end position="372"/>
    </location>
</feature>
<feature type="repeat" description="ARM 8" evidence="8">
    <location>
        <begin position="373"/>
        <end position="412"/>
    </location>
</feature>
<feature type="repeat" description="ARM 9" evidence="8">
    <location>
        <begin position="413"/>
        <end position="457"/>
    </location>
</feature>
<feature type="repeat" description="ARM 10; atypical">
    <location>
        <begin position="460"/>
        <end position="504"/>
    </location>
</feature>
<feature type="region of interest" description="Disordered" evidence="5">
    <location>
        <begin position="1"/>
        <end position="41"/>
    </location>
</feature>
<feature type="region of interest" description="NLS binding site (major)" evidence="1">
    <location>
        <begin position="149"/>
        <end position="241"/>
    </location>
</feature>
<feature type="region of interest" description="Binding to RAG1" evidence="2">
    <location>
        <begin position="245"/>
        <end position="437"/>
    </location>
</feature>
<feature type="region of interest" description="NLS binding site (minor)" evidence="1">
    <location>
        <begin position="318"/>
        <end position="406"/>
    </location>
</feature>
<feature type="short sequence motif" description="Nuclear localization signal" evidence="1">
    <location>
        <begin position="42"/>
        <end position="51"/>
    </location>
</feature>
<feature type="compositionally biased region" description="Basic and acidic residues" evidence="5">
    <location>
        <begin position="20"/>
        <end position="41"/>
    </location>
</feature>
<feature type="modified residue" description="N-acetylmethionine" evidence="2">
    <location>
        <position position="1"/>
    </location>
</feature>
<feature type="modified residue" description="Phosphothreonine" evidence="2">
    <location>
        <position position="3"/>
    </location>
</feature>
<feature type="modified residue" description="Phosphoserine" evidence="2">
    <location>
        <position position="63"/>
    </location>
</feature>
<keyword id="KW-0007">Acetylation</keyword>
<keyword id="KW-0963">Cytoplasm</keyword>
<keyword id="KW-0539">Nucleus</keyword>
<keyword id="KW-0597">Phosphoprotein</keyword>
<keyword id="KW-0653">Protein transport</keyword>
<keyword id="KW-1185">Reference proteome</keyword>
<keyword id="KW-0677">Repeat</keyword>
<keyword id="KW-0813">Transport</keyword>
<keyword id="KW-0832">Ubl conjugation</keyword>